<reference key="1">
    <citation type="journal article" date="1996" name="Nucleic Acids Res.">
        <title>Complete sequence analysis of the genome of the bacterium Mycoplasma pneumoniae.</title>
        <authorList>
            <person name="Himmelreich R."/>
            <person name="Hilbert H."/>
            <person name="Plagens H."/>
            <person name="Pirkl E."/>
            <person name="Li B.-C."/>
            <person name="Herrmann R."/>
        </authorList>
    </citation>
    <scope>NUCLEOTIDE SEQUENCE [LARGE SCALE GENOMIC DNA]</scope>
    <source>
        <strain>ATCC 29342 / M129 / Subtype 1</strain>
    </source>
</reference>
<reference key="2">
    <citation type="journal article" date="2000" name="Nucleic Acids Res.">
        <title>Re-annotating the Mycoplasma pneumoniae genome sequence: adding value, function and reading frames.</title>
        <authorList>
            <person name="Dandekar T."/>
            <person name="Huynen M."/>
            <person name="Regula J.T."/>
            <person name="Ueberle B."/>
            <person name="Zimmermann C.U."/>
            <person name="Andrade M.A."/>
            <person name="Doerks T."/>
            <person name="Sanchez-Pulido L."/>
            <person name="Snel B."/>
            <person name="Suyama M."/>
            <person name="Yuan Y.P."/>
            <person name="Herrmann R."/>
            <person name="Bork P."/>
        </authorList>
    </citation>
    <scope>IDENTIFICATION</scope>
    <source>
        <strain>ATCC 29342 / M129 / Subtype 1</strain>
    </source>
</reference>
<comment type="similarity">
    <text evidence="1">Belongs to the bacterial ribosomal protein bS21 family.</text>
</comment>
<protein>
    <recommendedName>
        <fullName evidence="1">Small ribosomal subunit protein bS21</fullName>
    </recommendedName>
    <alternativeName>
        <fullName>30S ribosomal protein S21</fullName>
    </alternativeName>
</protein>
<proteinExistence type="evidence at protein level"/>
<organism>
    <name type="scientific">Mycoplasma pneumoniae (strain ATCC 29342 / M129 / Subtype 1)</name>
    <name type="common">Mycoplasmoides pneumoniae</name>
    <dbReference type="NCBI Taxonomy" id="272634"/>
    <lineage>
        <taxon>Bacteria</taxon>
        <taxon>Bacillati</taxon>
        <taxon>Mycoplasmatota</taxon>
        <taxon>Mycoplasmoidales</taxon>
        <taxon>Mycoplasmoidaceae</taxon>
        <taxon>Mycoplasmoides</taxon>
    </lineage>
</organism>
<dbReference type="EMBL" id="U00089">
    <property type="protein sequence ID" value="AAG34754.1"/>
    <property type="molecule type" value="Genomic_DNA"/>
</dbReference>
<dbReference type="RefSeq" id="NP_109984.1">
    <property type="nucleotide sequence ID" value="NC_000912.1"/>
</dbReference>
<dbReference type="RefSeq" id="WP_010874653.1">
    <property type="nucleotide sequence ID" value="NZ_OU342337.1"/>
</dbReference>
<dbReference type="PDB" id="7OOC">
    <property type="method" value="EM"/>
    <property type="resolution" value="3.70 A"/>
    <property type="chains" value="T=1-60"/>
</dbReference>
<dbReference type="PDB" id="7P6Z">
    <property type="method" value="EM"/>
    <property type="resolution" value="3.50 A"/>
    <property type="chains" value="T=1-60"/>
</dbReference>
<dbReference type="PDB" id="7PAH">
    <property type="method" value="EM"/>
    <property type="resolution" value="9.50 A"/>
    <property type="chains" value="T=1-60"/>
</dbReference>
<dbReference type="PDB" id="7PAI">
    <property type="method" value="EM"/>
    <property type="resolution" value="6.70 A"/>
    <property type="chains" value="T=1-60"/>
</dbReference>
<dbReference type="PDB" id="7PAJ">
    <property type="method" value="EM"/>
    <property type="resolution" value="7.30 A"/>
    <property type="chains" value="T=1-60"/>
</dbReference>
<dbReference type="PDB" id="7PAK">
    <property type="method" value="EM"/>
    <property type="resolution" value="5.30 A"/>
    <property type="chains" value="T=1-60"/>
</dbReference>
<dbReference type="PDB" id="7PAL">
    <property type="method" value="EM"/>
    <property type="resolution" value="4.70 A"/>
    <property type="chains" value="T=1-60"/>
</dbReference>
<dbReference type="PDB" id="7PAM">
    <property type="method" value="EM"/>
    <property type="resolution" value="6.80 A"/>
    <property type="chains" value="T=1-60"/>
</dbReference>
<dbReference type="PDB" id="7PAN">
    <property type="method" value="EM"/>
    <property type="resolution" value="9.70 A"/>
    <property type="chains" value="T=1-60"/>
</dbReference>
<dbReference type="PDB" id="7PAO">
    <property type="method" value="EM"/>
    <property type="resolution" value="7.00 A"/>
    <property type="chains" value="T=1-60"/>
</dbReference>
<dbReference type="PDB" id="7PAQ">
    <property type="method" value="EM"/>
    <property type="resolution" value="8.90 A"/>
    <property type="chains" value="T=1-60"/>
</dbReference>
<dbReference type="PDB" id="7PAR">
    <property type="method" value="EM"/>
    <property type="resolution" value="8.20 A"/>
    <property type="chains" value="T=1-60"/>
</dbReference>
<dbReference type="PDB" id="7PAS">
    <property type="method" value="EM"/>
    <property type="resolution" value="16.00 A"/>
    <property type="chains" value="T=1-60"/>
</dbReference>
<dbReference type="PDB" id="7PH9">
    <property type="method" value="EM"/>
    <property type="resolution" value="8.70 A"/>
    <property type="chains" value="T=1-60"/>
</dbReference>
<dbReference type="PDB" id="7PHA">
    <property type="method" value="EM"/>
    <property type="resolution" value="8.50 A"/>
    <property type="chains" value="T=1-60"/>
</dbReference>
<dbReference type="PDB" id="7PHB">
    <property type="method" value="EM"/>
    <property type="resolution" value="4.90 A"/>
    <property type="chains" value="T=1-60"/>
</dbReference>
<dbReference type="PDB" id="7PHC">
    <property type="method" value="EM"/>
    <property type="resolution" value="9.90 A"/>
    <property type="chains" value="T=1-60"/>
</dbReference>
<dbReference type="PDB" id="7PI8">
    <property type="method" value="EM"/>
    <property type="resolution" value="8.90 A"/>
    <property type="chains" value="T=1-60"/>
</dbReference>
<dbReference type="PDB" id="7PI9">
    <property type="method" value="EM"/>
    <property type="resolution" value="6.30 A"/>
    <property type="chains" value="T=1-60"/>
</dbReference>
<dbReference type="PDB" id="7PIA">
    <property type="method" value="EM"/>
    <property type="resolution" value="13.60 A"/>
    <property type="chains" value="T=1-60"/>
</dbReference>
<dbReference type="PDB" id="7PIB">
    <property type="method" value="EM"/>
    <property type="resolution" value="4.70 A"/>
    <property type="chains" value="T=1-60"/>
</dbReference>
<dbReference type="PDB" id="7PIC">
    <property type="method" value="EM"/>
    <property type="resolution" value="9.10 A"/>
    <property type="chains" value="T=1-60"/>
</dbReference>
<dbReference type="PDB" id="7PIO">
    <property type="method" value="EM"/>
    <property type="resolution" value="9.50 A"/>
    <property type="chains" value="T=1-60"/>
</dbReference>
<dbReference type="PDB" id="7PIP">
    <property type="method" value="EM"/>
    <property type="resolution" value="9.30 A"/>
    <property type="chains" value="T=1-60"/>
</dbReference>
<dbReference type="PDB" id="7PIQ">
    <property type="method" value="EM"/>
    <property type="resolution" value="9.70 A"/>
    <property type="chains" value="T=1-60"/>
</dbReference>
<dbReference type="PDB" id="7PIR">
    <property type="method" value="EM"/>
    <property type="resolution" value="12.10 A"/>
    <property type="chains" value="T=1-60"/>
</dbReference>
<dbReference type="PDB" id="7PIS">
    <property type="method" value="EM"/>
    <property type="resolution" value="15.00 A"/>
    <property type="chains" value="T=1-60"/>
</dbReference>
<dbReference type="PDB" id="7PIT">
    <property type="method" value="EM"/>
    <property type="resolution" value="5.70 A"/>
    <property type="chains" value="T=1-60"/>
</dbReference>
<dbReference type="PDB" id="8P6P">
    <property type="method" value="EM"/>
    <property type="resolution" value="3.20 A"/>
    <property type="chains" value="T=1-60"/>
</dbReference>
<dbReference type="PDB" id="8P7X">
    <property type="method" value="EM"/>
    <property type="resolution" value="3.03 A"/>
    <property type="chains" value="T=1-60"/>
</dbReference>
<dbReference type="PDB" id="8P7Y">
    <property type="method" value="EM"/>
    <property type="resolution" value="3.70 A"/>
    <property type="chains" value="T=1-60"/>
</dbReference>
<dbReference type="PDB" id="8P8V">
    <property type="method" value="EM"/>
    <property type="resolution" value="8.70 A"/>
    <property type="chains" value="T=1-60"/>
</dbReference>
<dbReference type="PDB" id="8P8W">
    <property type="method" value="EM"/>
    <property type="resolution" value="8.70 A"/>
    <property type="chains" value="T=1-60"/>
</dbReference>
<dbReference type="PDBsum" id="7OOC"/>
<dbReference type="PDBsum" id="7P6Z"/>
<dbReference type="PDBsum" id="7PAH"/>
<dbReference type="PDBsum" id="7PAI"/>
<dbReference type="PDBsum" id="7PAJ"/>
<dbReference type="PDBsum" id="7PAK"/>
<dbReference type="PDBsum" id="7PAL"/>
<dbReference type="PDBsum" id="7PAM"/>
<dbReference type="PDBsum" id="7PAN"/>
<dbReference type="PDBsum" id="7PAO"/>
<dbReference type="PDBsum" id="7PAQ"/>
<dbReference type="PDBsum" id="7PAR"/>
<dbReference type="PDBsum" id="7PAS"/>
<dbReference type="PDBsum" id="7PH9"/>
<dbReference type="PDBsum" id="7PHA"/>
<dbReference type="PDBsum" id="7PHB"/>
<dbReference type="PDBsum" id="7PHC"/>
<dbReference type="PDBsum" id="7PI8"/>
<dbReference type="PDBsum" id="7PI9"/>
<dbReference type="PDBsum" id="7PIA"/>
<dbReference type="PDBsum" id="7PIB"/>
<dbReference type="PDBsum" id="7PIC"/>
<dbReference type="PDBsum" id="7PIO"/>
<dbReference type="PDBsum" id="7PIP"/>
<dbReference type="PDBsum" id="7PIQ"/>
<dbReference type="PDBsum" id="7PIR"/>
<dbReference type="PDBsum" id="7PIS"/>
<dbReference type="PDBsum" id="7PIT"/>
<dbReference type="PDBsum" id="8P6P"/>
<dbReference type="PDBsum" id="8P7X"/>
<dbReference type="PDBsum" id="8P7Y"/>
<dbReference type="PDBsum" id="8P8V"/>
<dbReference type="PDBsum" id="8P8W"/>
<dbReference type="EMDB" id="EMD-13234"/>
<dbReference type="EMDB" id="EMD-13272"/>
<dbReference type="EMDB" id="EMD-13273"/>
<dbReference type="EMDB" id="EMD-13274"/>
<dbReference type="EMDB" id="EMD-13275"/>
<dbReference type="EMDB" id="EMD-13276"/>
<dbReference type="EMDB" id="EMD-13277"/>
<dbReference type="EMDB" id="EMD-13278"/>
<dbReference type="EMDB" id="EMD-13279"/>
<dbReference type="EMDB" id="EMD-13280"/>
<dbReference type="EMDB" id="EMD-13281"/>
<dbReference type="EMDB" id="EMD-13282"/>
<dbReference type="EMDB" id="EMD-13410"/>
<dbReference type="EMDB" id="EMD-13411"/>
<dbReference type="EMDB" id="EMD-13412"/>
<dbReference type="EMDB" id="EMD-13413"/>
<dbReference type="EMDB" id="EMD-13432"/>
<dbReference type="EMDB" id="EMD-13433"/>
<dbReference type="EMDB" id="EMD-13434"/>
<dbReference type="EMDB" id="EMD-13435"/>
<dbReference type="EMDB" id="EMD-13436"/>
<dbReference type="EMDB" id="EMD-13445"/>
<dbReference type="EMDB" id="EMD-13446"/>
<dbReference type="EMDB" id="EMD-13447"/>
<dbReference type="EMDB" id="EMD-13448"/>
<dbReference type="EMDB" id="EMD-13449"/>
<dbReference type="EMDB" id="EMD-13450"/>
<dbReference type="SMR" id="P57079"/>
<dbReference type="STRING" id="272634.MPN_296"/>
<dbReference type="EnsemblBacteria" id="AAG34754">
    <property type="protein sequence ID" value="AAG34754"/>
    <property type="gene ID" value="MPN_296"/>
</dbReference>
<dbReference type="GeneID" id="66609057"/>
<dbReference type="KEGG" id="mpn:MPN_296"/>
<dbReference type="PATRIC" id="fig|272634.6.peg.320"/>
<dbReference type="HOGENOM" id="CLU_207223_0_0_14"/>
<dbReference type="OrthoDB" id="404044at2"/>
<dbReference type="BioCyc" id="MPNE272634:G1GJ3-464-MONOMER"/>
<dbReference type="Proteomes" id="UP000000808">
    <property type="component" value="Chromosome"/>
</dbReference>
<dbReference type="GO" id="GO:1990904">
    <property type="term" value="C:ribonucleoprotein complex"/>
    <property type="evidence" value="ECO:0007669"/>
    <property type="project" value="UniProtKB-KW"/>
</dbReference>
<dbReference type="GO" id="GO:0005840">
    <property type="term" value="C:ribosome"/>
    <property type="evidence" value="ECO:0007669"/>
    <property type="project" value="UniProtKB-KW"/>
</dbReference>
<dbReference type="GO" id="GO:0003735">
    <property type="term" value="F:structural constituent of ribosome"/>
    <property type="evidence" value="ECO:0007669"/>
    <property type="project" value="InterPro"/>
</dbReference>
<dbReference type="GO" id="GO:0006412">
    <property type="term" value="P:translation"/>
    <property type="evidence" value="ECO:0007669"/>
    <property type="project" value="UniProtKB-UniRule"/>
</dbReference>
<dbReference type="HAMAP" id="MF_00358">
    <property type="entry name" value="Ribosomal_bS21"/>
    <property type="match status" value="1"/>
</dbReference>
<dbReference type="InterPro" id="IPR001911">
    <property type="entry name" value="Ribosomal_bS21"/>
</dbReference>
<dbReference type="NCBIfam" id="TIGR00030">
    <property type="entry name" value="S21p"/>
    <property type="match status" value="1"/>
</dbReference>
<accession>P57079</accession>
<feature type="chain" id="PRO_0000178353" description="Small ribosomal subunit protein bS21">
    <location>
        <begin position="1"/>
        <end position="60"/>
    </location>
</feature>
<feature type="turn" evidence="2">
    <location>
        <begin position="7"/>
        <end position="9"/>
    </location>
</feature>
<feature type="helix" evidence="2">
    <location>
        <begin position="12"/>
        <end position="31"/>
    </location>
</feature>
<feature type="helix" evidence="2">
    <location>
        <begin position="38"/>
        <end position="59"/>
    </location>
</feature>
<evidence type="ECO:0000305" key="1"/>
<evidence type="ECO:0007829" key="2">
    <source>
        <dbReference type="PDB" id="8P6P"/>
    </source>
</evidence>
<gene>
    <name type="primary">rpsU</name>
    <name type="ordered locus">MPN_296</name>
    <name type="ORF">MP539.1</name>
</gene>
<name>RS21_MYCPN</name>
<keyword id="KW-0002">3D-structure</keyword>
<keyword id="KW-1185">Reference proteome</keyword>
<keyword id="KW-0687">Ribonucleoprotein</keyword>
<keyword id="KW-0689">Ribosomal protein</keyword>
<sequence>MPKIEVKNDDLELALKKFKRVSLEIRRLAQRHEYHLRKGMRLREKRKIAQKKRRKFRNMV</sequence>